<keyword id="KW-0255">Endonuclease</keyword>
<keyword id="KW-0378">Hydrolase</keyword>
<keyword id="KW-0540">Nuclease</keyword>
<keyword id="KW-1185">Reference proteome</keyword>
<keyword id="KW-0694">RNA-binding</keyword>
<proteinExistence type="inferred from homology"/>
<sequence>MIITILIAIFVIIYVRKNISQAKIAEAEAKSKKIIIDSEKNAEAIKKEAILEAKEEVHRIRNDFEKESRERRNEIQRLERRIIQREELLDKKSEAIENKEEVLNKKQQDINEKAASIDELYDKQREELEKLSNLSSDEARELLLEETKKEIRHDLAVMIKEMENKAKEEADKKAKEIISTAIQRCAADHVAESTVHVVSLPNDEMKGRIIGREGRNIRALETLTGVDLIIDDTPEAVILSGFDPIRRQVARIALEKLIIDGRIHPARIEEMVEKAKQEVENDIKEEGEQATFETGVHGLHQELVKLLGRLKYRTSYGQNVLKHSMEVAYLAGLMASELGMDPTLAKRSGLLHDIGKAVDHEIEGPHALIGSEMAKKYHESSVVVNAIAAHHGDVEYESIEAILVQAADAISAARPGARRETLEAYIKRLEKLEEIANSYEGVEKSYAIQAGREVRIMVKPEDIDDYGCIEMSKNIVKRIESELEYPGQIKVNIIREVRAVEYAK</sequence>
<comment type="function">
    <text evidence="1">Endoribonuclease that initiates mRNA decay.</text>
</comment>
<comment type="similarity">
    <text evidence="1">Belongs to the RNase Y family.</text>
</comment>
<feature type="chain" id="PRO_0000344852" description="Ribonuclease Y">
    <location>
        <begin position="1"/>
        <end position="504"/>
    </location>
</feature>
<feature type="domain" description="KH" evidence="1">
    <location>
        <begin position="194"/>
        <end position="279"/>
    </location>
</feature>
<feature type="domain" description="HD" evidence="2">
    <location>
        <begin position="320"/>
        <end position="413"/>
    </location>
</feature>
<dbReference type="EC" id="3.1.-.-" evidence="1"/>
<dbReference type="EMBL" id="CP000382">
    <property type="protein sequence ID" value="ABK62001.1"/>
    <property type="molecule type" value="Genomic_DNA"/>
</dbReference>
<dbReference type="RefSeq" id="WP_011722195.1">
    <property type="nucleotide sequence ID" value="NC_008593.1"/>
</dbReference>
<dbReference type="SMR" id="A0Q0P3"/>
<dbReference type="STRING" id="386415.NT01CX_2122"/>
<dbReference type="KEGG" id="cno:NT01CX_2122"/>
<dbReference type="PATRIC" id="fig|386415.7.peg.1227"/>
<dbReference type="eggNOG" id="COG1418">
    <property type="taxonomic scope" value="Bacteria"/>
</dbReference>
<dbReference type="HOGENOM" id="CLU_028328_1_0_9"/>
<dbReference type="Proteomes" id="UP000008220">
    <property type="component" value="Chromosome"/>
</dbReference>
<dbReference type="GO" id="GO:0005886">
    <property type="term" value="C:plasma membrane"/>
    <property type="evidence" value="ECO:0007669"/>
    <property type="project" value="UniProtKB-UniRule"/>
</dbReference>
<dbReference type="GO" id="GO:0003723">
    <property type="term" value="F:RNA binding"/>
    <property type="evidence" value="ECO:0007669"/>
    <property type="project" value="UniProtKB-UniRule"/>
</dbReference>
<dbReference type="GO" id="GO:0004521">
    <property type="term" value="F:RNA endonuclease activity"/>
    <property type="evidence" value="ECO:0007669"/>
    <property type="project" value="UniProtKB-UniRule"/>
</dbReference>
<dbReference type="GO" id="GO:0006402">
    <property type="term" value="P:mRNA catabolic process"/>
    <property type="evidence" value="ECO:0007669"/>
    <property type="project" value="UniProtKB-UniRule"/>
</dbReference>
<dbReference type="CDD" id="cd00077">
    <property type="entry name" value="HDc"/>
    <property type="match status" value="1"/>
</dbReference>
<dbReference type="CDD" id="cd22431">
    <property type="entry name" value="KH-I_RNaseY"/>
    <property type="match status" value="1"/>
</dbReference>
<dbReference type="FunFam" id="1.10.3210.10:FF:000003">
    <property type="entry name" value="Ribonuclease Y"/>
    <property type="match status" value="1"/>
</dbReference>
<dbReference type="FunFam" id="3.30.1370.10:FF:000006">
    <property type="entry name" value="Ribonuclease Y"/>
    <property type="match status" value="1"/>
</dbReference>
<dbReference type="Gene3D" id="1.10.3210.10">
    <property type="entry name" value="Hypothetical protein af1432"/>
    <property type="match status" value="1"/>
</dbReference>
<dbReference type="Gene3D" id="3.30.1370.10">
    <property type="entry name" value="K Homology domain, type 1"/>
    <property type="match status" value="1"/>
</dbReference>
<dbReference type="HAMAP" id="MF_00335">
    <property type="entry name" value="RNase_Y"/>
    <property type="match status" value="1"/>
</dbReference>
<dbReference type="InterPro" id="IPR003607">
    <property type="entry name" value="HD/PDEase_dom"/>
</dbReference>
<dbReference type="InterPro" id="IPR006674">
    <property type="entry name" value="HD_domain"/>
</dbReference>
<dbReference type="InterPro" id="IPR006675">
    <property type="entry name" value="HDIG_dom"/>
</dbReference>
<dbReference type="InterPro" id="IPR004087">
    <property type="entry name" value="KH_dom"/>
</dbReference>
<dbReference type="InterPro" id="IPR004088">
    <property type="entry name" value="KH_dom_type_1"/>
</dbReference>
<dbReference type="InterPro" id="IPR036612">
    <property type="entry name" value="KH_dom_type_1_sf"/>
</dbReference>
<dbReference type="InterPro" id="IPR017705">
    <property type="entry name" value="Ribonuclease_Y"/>
</dbReference>
<dbReference type="InterPro" id="IPR022711">
    <property type="entry name" value="RNase_Y_N"/>
</dbReference>
<dbReference type="NCBIfam" id="TIGR00277">
    <property type="entry name" value="HDIG"/>
    <property type="match status" value="1"/>
</dbReference>
<dbReference type="NCBIfam" id="TIGR03319">
    <property type="entry name" value="RNase_Y"/>
    <property type="match status" value="1"/>
</dbReference>
<dbReference type="PANTHER" id="PTHR12826">
    <property type="entry name" value="RIBONUCLEASE Y"/>
    <property type="match status" value="1"/>
</dbReference>
<dbReference type="PANTHER" id="PTHR12826:SF15">
    <property type="entry name" value="RIBONUCLEASE Y"/>
    <property type="match status" value="1"/>
</dbReference>
<dbReference type="Pfam" id="PF01966">
    <property type="entry name" value="HD"/>
    <property type="match status" value="1"/>
</dbReference>
<dbReference type="Pfam" id="PF00013">
    <property type="entry name" value="KH_1"/>
    <property type="match status" value="1"/>
</dbReference>
<dbReference type="Pfam" id="PF12072">
    <property type="entry name" value="RNase_Y_N"/>
    <property type="match status" value="1"/>
</dbReference>
<dbReference type="SMART" id="SM00471">
    <property type="entry name" value="HDc"/>
    <property type="match status" value="1"/>
</dbReference>
<dbReference type="SMART" id="SM00322">
    <property type="entry name" value="KH"/>
    <property type="match status" value="1"/>
</dbReference>
<dbReference type="SUPFAM" id="SSF54791">
    <property type="entry name" value="Eukaryotic type KH-domain (KH-domain type I)"/>
    <property type="match status" value="1"/>
</dbReference>
<dbReference type="SUPFAM" id="SSF109604">
    <property type="entry name" value="HD-domain/PDEase-like"/>
    <property type="match status" value="1"/>
</dbReference>
<dbReference type="PROSITE" id="PS51831">
    <property type="entry name" value="HD"/>
    <property type="match status" value="1"/>
</dbReference>
<dbReference type="PROSITE" id="PS50084">
    <property type="entry name" value="KH_TYPE_1"/>
    <property type="match status" value="1"/>
</dbReference>
<gene>
    <name evidence="1" type="primary">rny</name>
    <name type="ordered locus">NT01CX_2122</name>
</gene>
<accession>A0Q0P3</accession>
<reference key="1">
    <citation type="journal article" date="2006" name="Nat. Biotechnol.">
        <title>The genome and transcriptomes of the anti-tumor agent Clostridium novyi-NT.</title>
        <authorList>
            <person name="Bettegowda C."/>
            <person name="Huang X."/>
            <person name="Lin J."/>
            <person name="Cheong I."/>
            <person name="Kohli M."/>
            <person name="Szabo S.A."/>
            <person name="Zhang X."/>
            <person name="Diaz L.A. Jr."/>
            <person name="Velculescu V.E."/>
            <person name="Parmigiani G."/>
            <person name="Kinzler K.W."/>
            <person name="Vogelstein B."/>
            <person name="Zhou S."/>
        </authorList>
    </citation>
    <scope>NUCLEOTIDE SEQUENCE [LARGE SCALE GENOMIC DNA]</scope>
    <source>
        <strain>NT</strain>
    </source>
</reference>
<organism>
    <name type="scientific">Clostridium novyi (strain NT)</name>
    <dbReference type="NCBI Taxonomy" id="386415"/>
    <lineage>
        <taxon>Bacteria</taxon>
        <taxon>Bacillati</taxon>
        <taxon>Bacillota</taxon>
        <taxon>Clostridia</taxon>
        <taxon>Eubacteriales</taxon>
        <taxon>Clostridiaceae</taxon>
        <taxon>Clostridium</taxon>
    </lineage>
</organism>
<evidence type="ECO:0000255" key="1">
    <source>
        <dbReference type="HAMAP-Rule" id="MF_00335"/>
    </source>
</evidence>
<evidence type="ECO:0000255" key="2">
    <source>
        <dbReference type="PROSITE-ProRule" id="PRU01175"/>
    </source>
</evidence>
<protein>
    <recommendedName>
        <fullName evidence="1">Ribonuclease Y</fullName>
        <shortName evidence="1">RNase Y</shortName>
        <ecNumber evidence="1">3.1.-.-</ecNumber>
    </recommendedName>
</protein>
<name>RNY_CLONN</name>